<evidence type="ECO:0000255" key="1">
    <source>
        <dbReference type="HAMAP-Rule" id="MF_00440"/>
    </source>
</evidence>
<proteinExistence type="inferred from homology"/>
<gene>
    <name evidence="1" type="primary">nrdR</name>
    <name type="ordered locus">SG0650</name>
</gene>
<organism>
    <name type="scientific">Sodalis glossinidius (strain morsitans)</name>
    <dbReference type="NCBI Taxonomy" id="343509"/>
    <lineage>
        <taxon>Bacteria</taxon>
        <taxon>Pseudomonadati</taxon>
        <taxon>Pseudomonadota</taxon>
        <taxon>Gammaproteobacteria</taxon>
        <taxon>Enterobacterales</taxon>
        <taxon>Bruguierivoracaceae</taxon>
        <taxon>Sodalis</taxon>
    </lineage>
</organism>
<sequence>MHCPFCSAVDTKVIDSRLVGEGTQVRRRRQCVICNERFTTFEVAELVLPRVIKSNDVREPFNEEKLRSGFLKALEKRPVKSDDVEMAINHIKSQLRATGEREVPSKMIGNLVMDALKKLDKVAYIRFASVYRSFEDIREFGEEIARLQD</sequence>
<reference key="1">
    <citation type="journal article" date="2006" name="Genome Res.">
        <title>Massive genome erosion and functional adaptations provide insights into the symbiotic lifestyle of Sodalis glossinidius in the tsetse host.</title>
        <authorList>
            <person name="Toh H."/>
            <person name="Weiss B.L."/>
            <person name="Perkin S.A.H."/>
            <person name="Yamashita A."/>
            <person name="Oshima K."/>
            <person name="Hattori M."/>
            <person name="Aksoy S."/>
        </authorList>
    </citation>
    <scope>NUCLEOTIDE SEQUENCE [LARGE SCALE GENOMIC DNA]</scope>
    <source>
        <strain>morsitans</strain>
    </source>
</reference>
<keyword id="KW-0067">ATP-binding</keyword>
<keyword id="KW-0238">DNA-binding</keyword>
<keyword id="KW-0479">Metal-binding</keyword>
<keyword id="KW-0547">Nucleotide-binding</keyword>
<keyword id="KW-0678">Repressor</keyword>
<keyword id="KW-0804">Transcription</keyword>
<keyword id="KW-0805">Transcription regulation</keyword>
<keyword id="KW-0862">Zinc</keyword>
<keyword id="KW-0863">Zinc-finger</keyword>
<accession>Q2NVA0</accession>
<feature type="chain" id="PRO_0000264213" description="Transcriptional repressor NrdR">
    <location>
        <begin position="1"/>
        <end position="149"/>
    </location>
</feature>
<feature type="domain" description="ATP-cone" evidence="1">
    <location>
        <begin position="49"/>
        <end position="139"/>
    </location>
</feature>
<feature type="zinc finger region" evidence="1">
    <location>
        <begin position="3"/>
        <end position="34"/>
    </location>
</feature>
<dbReference type="EMBL" id="AP008232">
    <property type="protein sequence ID" value="BAE73925.1"/>
    <property type="molecule type" value="Genomic_DNA"/>
</dbReference>
<dbReference type="RefSeq" id="WP_011410403.1">
    <property type="nucleotide sequence ID" value="NZ_LN854557.1"/>
</dbReference>
<dbReference type="SMR" id="Q2NVA0"/>
<dbReference type="STRING" id="343509.SG0650"/>
<dbReference type="KEGG" id="sgl:SG0650"/>
<dbReference type="eggNOG" id="COG1327">
    <property type="taxonomic scope" value="Bacteria"/>
</dbReference>
<dbReference type="HOGENOM" id="CLU_108412_0_0_6"/>
<dbReference type="OrthoDB" id="9807461at2"/>
<dbReference type="BioCyc" id="SGLO343509:SGP1_RS05650-MONOMER"/>
<dbReference type="Proteomes" id="UP000001932">
    <property type="component" value="Chromosome"/>
</dbReference>
<dbReference type="GO" id="GO:0005524">
    <property type="term" value="F:ATP binding"/>
    <property type="evidence" value="ECO:0007669"/>
    <property type="project" value="UniProtKB-KW"/>
</dbReference>
<dbReference type="GO" id="GO:0003677">
    <property type="term" value="F:DNA binding"/>
    <property type="evidence" value="ECO:0007669"/>
    <property type="project" value="UniProtKB-KW"/>
</dbReference>
<dbReference type="GO" id="GO:0008270">
    <property type="term" value="F:zinc ion binding"/>
    <property type="evidence" value="ECO:0007669"/>
    <property type="project" value="UniProtKB-UniRule"/>
</dbReference>
<dbReference type="GO" id="GO:0045892">
    <property type="term" value="P:negative regulation of DNA-templated transcription"/>
    <property type="evidence" value="ECO:0007669"/>
    <property type="project" value="UniProtKB-UniRule"/>
</dbReference>
<dbReference type="HAMAP" id="MF_00440">
    <property type="entry name" value="NrdR"/>
    <property type="match status" value="1"/>
</dbReference>
<dbReference type="InterPro" id="IPR005144">
    <property type="entry name" value="ATP-cone_dom"/>
</dbReference>
<dbReference type="InterPro" id="IPR055173">
    <property type="entry name" value="NrdR-like_N"/>
</dbReference>
<dbReference type="InterPro" id="IPR003796">
    <property type="entry name" value="RNR_NrdR-like"/>
</dbReference>
<dbReference type="NCBIfam" id="TIGR00244">
    <property type="entry name" value="transcriptional regulator NrdR"/>
    <property type="match status" value="1"/>
</dbReference>
<dbReference type="PANTHER" id="PTHR30455">
    <property type="entry name" value="TRANSCRIPTIONAL REPRESSOR NRDR"/>
    <property type="match status" value="1"/>
</dbReference>
<dbReference type="PANTHER" id="PTHR30455:SF2">
    <property type="entry name" value="TRANSCRIPTIONAL REPRESSOR NRDR"/>
    <property type="match status" value="1"/>
</dbReference>
<dbReference type="Pfam" id="PF03477">
    <property type="entry name" value="ATP-cone"/>
    <property type="match status" value="1"/>
</dbReference>
<dbReference type="Pfam" id="PF22811">
    <property type="entry name" value="Zn_ribbon_NrdR"/>
    <property type="match status" value="1"/>
</dbReference>
<dbReference type="PROSITE" id="PS51161">
    <property type="entry name" value="ATP_CONE"/>
    <property type="match status" value="1"/>
</dbReference>
<comment type="function">
    <text evidence="1">Negatively regulates transcription of bacterial ribonucleotide reductase nrd genes and operons by binding to NrdR-boxes.</text>
</comment>
<comment type="cofactor">
    <cofactor evidence="1">
        <name>Zn(2+)</name>
        <dbReference type="ChEBI" id="CHEBI:29105"/>
    </cofactor>
    <text evidence="1">Binds 1 zinc ion.</text>
</comment>
<comment type="similarity">
    <text evidence="1">Belongs to the NrdR family.</text>
</comment>
<protein>
    <recommendedName>
        <fullName evidence="1">Transcriptional repressor NrdR</fullName>
    </recommendedName>
</protein>
<name>NRDR_SODGM</name>